<dbReference type="EC" id="7.1.1.8" evidence="2"/>
<dbReference type="EMBL" id="LT708304">
    <property type="protein sequence ID" value="SIU00827.1"/>
    <property type="molecule type" value="Genomic_DNA"/>
</dbReference>
<dbReference type="RefSeq" id="NP_855868.1">
    <property type="nucleotide sequence ID" value="NC_002945.3"/>
</dbReference>
<dbReference type="RefSeq" id="WP_003899212.1">
    <property type="nucleotide sequence ID" value="NC_002945.4"/>
</dbReference>
<dbReference type="SMR" id="P63886"/>
<dbReference type="KEGG" id="mbo:BQ2027_MB2219"/>
<dbReference type="PATRIC" id="fig|233413.5.peg.2435"/>
<dbReference type="Proteomes" id="UP000001419">
    <property type="component" value="Chromosome"/>
</dbReference>
<dbReference type="GO" id="GO:0005886">
    <property type="term" value="C:plasma membrane"/>
    <property type="evidence" value="ECO:0007669"/>
    <property type="project" value="UniProtKB-SubCell"/>
</dbReference>
<dbReference type="GO" id="GO:0046872">
    <property type="term" value="F:metal ion binding"/>
    <property type="evidence" value="ECO:0007669"/>
    <property type="project" value="UniProtKB-KW"/>
</dbReference>
<dbReference type="GO" id="GO:0008121">
    <property type="term" value="F:ubiquinol-cytochrome-c reductase activity"/>
    <property type="evidence" value="ECO:0007669"/>
    <property type="project" value="UniProtKB-EC"/>
</dbReference>
<dbReference type="GO" id="GO:0022904">
    <property type="term" value="P:respiratory electron transport chain"/>
    <property type="evidence" value="ECO:0007669"/>
    <property type="project" value="InterPro"/>
</dbReference>
<dbReference type="FunFam" id="1.20.810.10:FF:000007">
    <property type="entry name" value="Ubiquinol-cytochrome C reductase B subunit"/>
    <property type="match status" value="1"/>
</dbReference>
<dbReference type="Gene3D" id="1.20.810.10">
    <property type="entry name" value="Cytochrome Bc1 Complex, Chain C"/>
    <property type="match status" value="1"/>
</dbReference>
<dbReference type="InterPro" id="IPR005797">
    <property type="entry name" value="Cyt_b/b6_N"/>
</dbReference>
<dbReference type="InterPro" id="IPR027387">
    <property type="entry name" value="Cytb/b6-like_sf"/>
</dbReference>
<dbReference type="InterPro" id="IPR016174">
    <property type="entry name" value="Di-haem_cyt_TM"/>
</dbReference>
<dbReference type="PANTHER" id="PTHR19271">
    <property type="entry name" value="CYTOCHROME B"/>
    <property type="match status" value="1"/>
</dbReference>
<dbReference type="PANTHER" id="PTHR19271:SF16">
    <property type="entry name" value="CYTOCHROME B"/>
    <property type="match status" value="1"/>
</dbReference>
<dbReference type="Pfam" id="PF13631">
    <property type="entry name" value="Cytochrom_B_N_2"/>
    <property type="match status" value="1"/>
</dbReference>
<dbReference type="SUPFAM" id="SSF81342">
    <property type="entry name" value="Transmembrane di-heme cytochromes"/>
    <property type="match status" value="1"/>
</dbReference>
<dbReference type="PROSITE" id="PS51002">
    <property type="entry name" value="CYTB_NTER"/>
    <property type="match status" value="1"/>
</dbReference>
<protein>
    <recommendedName>
        <fullName>Cytochrome bc1 complex cytochrome b subunit</fullName>
        <ecNumber evidence="2">7.1.1.8</ecNumber>
    </recommendedName>
    <alternativeName>
        <fullName>Cytochrome bc1 reductase complex subunit QcrB</fullName>
    </alternativeName>
    <alternativeName>
        <fullName>Ubiquinol--cytochrome c reductase cytochrome b subunit</fullName>
    </alternativeName>
</protein>
<keyword id="KW-1003">Cell membrane</keyword>
<keyword id="KW-0249">Electron transport</keyword>
<keyword id="KW-0349">Heme</keyword>
<keyword id="KW-0408">Iron</keyword>
<keyword id="KW-0472">Membrane</keyword>
<keyword id="KW-0479">Metal-binding</keyword>
<keyword id="KW-1185">Reference proteome</keyword>
<keyword id="KW-0679">Respiratory chain</keyword>
<keyword id="KW-1278">Translocase</keyword>
<keyword id="KW-0812">Transmembrane</keyword>
<keyword id="KW-1133">Transmembrane helix</keyword>
<keyword id="KW-0813">Transport</keyword>
<accession>P63886</accession>
<accession>A0A1R3Y0W5</accession>
<accession>Q10388</accession>
<accession>X2BKE6</accession>
<reference key="1">
    <citation type="journal article" date="2003" name="Proc. Natl. Acad. Sci. U.S.A.">
        <title>The complete genome sequence of Mycobacterium bovis.</title>
        <authorList>
            <person name="Garnier T."/>
            <person name="Eiglmeier K."/>
            <person name="Camus J.-C."/>
            <person name="Medina N."/>
            <person name="Mansoor H."/>
            <person name="Pryor M."/>
            <person name="Duthoy S."/>
            <person name="Grondin S."/>
            <person name="Lacroix C."/>
            <person name="Monsempe C."/>
            <person name="Simon S."/>
            <person name="Harris B."/>
            <person name="Atkin R."/>
            <person name="Doggett J."/>
            <person name="Mayes R."/>
            <person name="Keating L."/>
            <person name="Wheeler P.R."/>
            <person name="Parkhill J."/>
            <person name="Barrell B.G."/>
            <person name="Cole S.T."/>
            <person name="Gordon S.V."/>
            <person name="Hewinson R.G."/>
        </authorList>
    </citation>
    <scope>NUCLEOTIDE SEQUENCE [LARGE SCALE GENOMIC DNA]</scope>
    <source>
        <strain>ATCC BAA-935 / AF2122/97</strain>
    </source>
</reference>
<reference key="2">
    <citation type="journal article" date="2017" name="Genome Announc.">
        <title>Updated reference genome sequence and annotation of Mycobacterium bovis AF2122/97.</title>
        <authorList>
            <person name="Malone K.M."/>
            <person name="Farrell D."/>
            <person name="Stuber T.P."/>
            <person name="Schubert O.T."/>
            <person name="Aebersold R."/>
            <person name="Robbe-Austerman S."/>
            <person name="Gordon S.V."/>
        </authorList>
    </citation>
    <scope>NUCLEOTIDE SEQUENCE [LARGE SCALE GENOMIC DNA]</scope>
    <scope>GENOME REANNOTATION</scope>
    <source>
        <strain>ATCC BAA-935 / AF2122/97</strain>
    </source>
</reference>
<gene>
    <name type="primary">qcrB</name>
    <name type="ordered locus">BQ2027_MB2219</name>
</gene>
<organism>
    <name type="scientific">Mycobacterium bovis (strain ATCC BAA-935 / AF2122/97)</name>
    <dbReference type="NCBI Taxonomy" id="233413"/>
    <lineage>
        <taxon>Bacteria</taxon>
        <taxon>Bacillati</taxon>
        <taxon>Actinomycetota</taxon>
        <taxon>Actinomycetes</taxon>
        <taxon>Mycobacteriales</taxon>
        <taxon>Mycobacteriaceae</taxon>
        <taxon>Mycobacterium</taxon>
        <taxon>Mycobacterium tuberculosis complex</taxon>
    </lineage>
</organism>
<feature type="chain" id="PRO_0000061925" description="Cytochrome bc1 complex cytochrome b subunit">
    <location>
        <begin position="1"/>
        <end position="549"/>
    </location>
</feature>
<feature type="transmembrane region" description="Helical" evidence="4">
    <location>
        <begin position="45"/>
        <end position="65"/>
    </location>
</feature>
<feature type="transmembrane region" description="Helical" evidence="4">
    <location>
        <begin position="118"/>
        <end position="138"/>
    </location>
</feature>
<feature type="transmembrane region" description="Helical" evidence="4">
    <location>
        <begin position="146"/>
        <end position="166"/>
    </location>
</feature>
<feature type="transmembrane region" description="Helical" evidence="4">
    <location>
        <begin position="189"/>
        <end position="209"/>
    </location>
</feature>
<feature type="transmembrane region" description="Helical" evidence="4">
    <location>
        <begin position="217"/>
        <end position="237"/>
    </location>
</feature>
<feature type="transmembrane region" description="Helical" evidence="4">
    <location>
        <begin position="266"/>
        <end position="286"/>
    </location>
</feature>
<feature type="transmembrane region" description="Helical" evidence="4">
    <location>
        <begin position="335"/>
        <end position="355"/>
    </location>
</feature>
<feature type="transmembrane region" description="Helical" evidence="4">
    <location>
        <begin position="381"/>
        <end position="401"/>
    </location>
</feature>
<feature type="transmembrane region" description="Helical" evidence="4">
    <location>
        <begin position="418"/>
        <end position="438"/>
    </location>
</feature>
<feature type="binding site" description="axial binding residue" evidence="4">
    <location>
        <position position="114"/>
    </location>
    <ligand>
        <name>heme</name>
        <dbReference type="ChEBI" id="CHEBI:30413"/>
        <label>1</label>
    </ligand>
    <ligandPart>
        <name>Fe</name>
        <dbReference type="ChEBI" id="CHEBI:18248"/>
    </ligandPart>
</feature>
<feature type="binding site" description="axial binding residue" evidence="4">
    <location>
        <position position="128"/>
    </location>
    <ligand>
        <name>heme</name>
        <dbReference type="ChEBI" id="CHEBI:30413"/>
        <label>2</label>
    </ligand>
    <ligandPart>
        <name>Fe</name>
        <dbReference type="ChEBI" id="CHEBI:18248"/>
    </ligandPart>
</feature>
<feature type="binding site" description="axial binding residue" evidence="4">
    <location>
        <position position="216"/>
    </location>
    <ligand>
        <name>heme</name>
        <dbReference type="ChEBI" id="CHEBI:30413"/>
        <label>1</label>
    </ligand>
    <ligandPart>
        <name>Fe</name>
        <dbReference type="ChEBI" id="CHEBI:18248"/>
    </ligandPart>
</feature>
<feature type="binding site" description="axial binding residue" evidence="4">
    <location>
        <position position="231"/>
    </location>
    <ligand>
        <name>heme</name>
        <dbReference type="ChEBI" id="CHEBI:30413"/>
        <label>2</label>
    </ligand>
    <ligandPart>
        <name>Fe</name>
        <dbReference type="ChEBI" id="CHEBI:18248"/>
    </ligandPart>
</feature>
<comment type="function">
    <text evidence="2">Cytochrome b subunit of the cytochrome bc1 complex, an essential component of the respiratory electron transport chain required for ATP synthesis. The bc1 complex catalyzes the oxidation of ubiquinol and the reduction of cytochrome c in the respiratory chain. The bc1 complex operates through a Q-cycle mechanism that couples electron transfer to generation of the proton gradient that drives ATP synthesis. The cytochrome b subunit contains two ubiquinol reactive sites: the oxidation (QP) site and the reduction (QN) site.</text>
</comment>
<comment type="catalytic activity">
    <reaction evidence="2">
        <text>a quinol + 2 Fe(III)-[cytochrome c](out) = a quinone + 2 Fe(II)-[cytochrome c](out) + 2 H(+)(out)</text>
        <dbReference type="Rhea" id="RHEA:11484"/>
        <dbReference type="Rhea" id="RHEA-COMP:10350"/>
        <dbReference type="Rhea" id="RHEA-COMP:14399"/>
        <dbReference type="ChEBI" id="CHEBI:15378"/>
        <dbReference type="ChEBI" id="CHEBI:24646"/>
        <dbReference type="ChEBI" id="CHEBI:29033"/>
        <dbReference type="ChEBI" id="CHEBI:29034"/>
        <dbReference type="ChEBI" id="CHEBI:132124"/>
        <dbReference type="EC" id="7.1.1.8"/>
    </reaction>
</comment>
<comment type="cofactor">
    <cofactor evidence="1">
        <name>heme</name>
        <dbReference type="ChEBI" id="CHEBI:30413"/>
    </cofactor>
    <text evidence="1">Binds 2 heme groups non-covalently per subunit.</text>
</comment>
<comment type="subunit">
    <text evidence="2">The cytochrome bc1 complex is composed of a cytochrome b (QcrB), the Rieske iron-sulfur protein (QcrA) and a diheme cytochrome c (QcrC) subunit.</text>
</comment>
<comment type="subcellular location">
    <subcellularLocation>
        <location evidence="3">Cell membrane</location>
        <topology evidence="3">Multi-pass membrane protein</topology>
    </subcellularLocation>
</comment>
<comment type="similarity">
    <text evidence="4">Belongs to the cytochrome b family.</text>
</comment>
<evidence type="ECO:0000250" key="1">
    <source>
        <dbReference type="UniProtKB" id="P00163"/>
    </source>
</evidence>
<evidence type="ECO:0000250" key="2">
    <source>
        <dbReference type="UniProtKB" id="P9WP37"/>
    </source>
</evidence>
<evidence type="ECO:0000255" key="3"/>
<evidence type="ECO:0000255" key="4">
    <source>
        <dbReference type="PROSITE-ProRule" id="PRU00968"/>
    </source>
</evidence>
<sequence length="549" mass="61014">MSPKLSPPNIGEVLARQAEDIDTRYHPSAALRRQLNKVFPTHWSFLLGEIALYSFVVLLITGVYLTLFFDPSMVDVTYNGVYQPLRGVEMSRAYQSALDISFEVRGGLFVRQIHHWAALMFAAAIMVHLARIFFTGAFRRPRETNWVIGSLLLILAMFEGYFGYSLPDDLLSGLGLRAALSSITLGMPVIGTWLHWALFGGDFPGTILIPRLYALHILLLPGIILALIGLHLALVWFQKHTQFPGPGRTEHNVVGVRVMPVFAFKSGAFFAAIVGVLGLMGGLLQINPIWNLGPYKPSQVSAGSQPDFYMMWTEGLARIWPPWEFYFWHHTIPAPVWVAVIMGLVFVLLPAYPFLEKRFTGDYAHHNLLQRPRDVPVRTAIGAMAIAFYMVLTLAAMNDIIALKFHISLNATTWIGRIGMVILPPFVYFITYRWCIGLQRSDRSVLEHGVETGIIKRLPHGAYIELHQPLGPVDEHGHPIPLQYQGAPLPKRMNKLGSAGSPGSGSFLFADSAAEDAALREAGHAAEQRALAALREHQDSIMGSPDGEH</sequence>
<proteinExistence type="inferred from homology"/>
<name>QCRB_MYCBO</name>